<gene>
    <name evidence="1" type="primary">cobS</name>
    <name type="ordered locus">DvMF_1392</name>
</gene>
<evidence type="ECO:0000255" key="1">
    <source>
        <dbReference type="HAMAP-Rule" id="MF_00719"/>
    </source>
</evidence>
<proteinExistence type="inferred from homology"/>
<keyword id="KW-0997">Cell inner membrane</keyword>
<keyword id="KW-1003">Cell membrane</keyword>
<keyword id="KW-0169">Cobalamin biosynthesis</keyword>
<keyword id="KW-0460">Magnesium</keyword>
<keyword id="KW-0472">Membrane</keyword>
<keyword id="KW-0808">Transferase</keyword>
<keyword id="KW-0812">Transmembrane</keyword>
<keyword id="KW-1133">Transmembrane helix</keyword>
<feature type="chain" id="PRO_1000212690" description="Adenosylcobinamide-GDP ribazoletransferase">
    <location>
        <begin position="1"/>
        <end position="251"/>
    </location>
</feature>
<feature type="transmembrane region" description="Helical" evidence="1">
    <location>
        <begin position="44"/>
        <end position="64"/>
    </location>
</feature>
<feature type="transmembrane region" description="Helical" evidence="1">
    <location>
        <begin position="114"/>
        <end position="134"/>
    </location>
</feature>
<feature type="transmembrane region" description="Helical" evidence="1">
    <location>
        <begin position="143"/>
        <end position="163"/>
    </location>
</feature>
<feature type="transmembrane region" description="Helical" evidence="1">
    <location>
        <begin position="177"/>
        <end position="197"/>
    </location>
</feature>
<feature type="transmembrane region" description="Helical" evidence="1">
    <location>
        <begin position="198"/>
        <end position="218"/>
    </location>
</feature>
<comment type="function">
    <text evidence="1">Joins adenosylcobinamide-GDP and alpha-ribazole to generate adenosylcobalamin (Ado-cobalamin). Also synthesizes adenosylcobalamin 5'-phosphate from adenosylcobinamide-GDP and alpha-ribazole 5'-phosphate.</text>
</comment>
<comment type="catalytic activity">
    <reaction evidence="1">
        <text>alpha-ribazole + adenosylcob(III)inamide-GDP = adenosylcob(III)alamin + GMP + H(+)</text>
        <dbReference type="Rhea" id="RHEA:16049"/>
        <dbReference type="ChEBI" id="CHEBI:10329"/>
        <dbReference type="ChEBI" id="CHEBI:15378"/>
        <dbReference type="ChEBI" id="CHEBI:18408"/>
        <dbReference type="ChEBI" id="CHEBI:58115"/>
        <dbReference type="ChEBI" id="CHEBI:60487"/>
        <dbReference type="EC" id="2.7.8.26"/>
    </reaction>
</comment>
<comment type="catalytic activity">
    <reaction evidence="1">
        <text>alpha-ribazole 5'-phosphate + adenosylcob(III)inamide-GDP = adenosylcob(III)alamin 5'-phosphate + GMP + H(+)</text>
        <dbReference type="Rhea" id="RHEA:23560"/>
        <dbReference type="ChEBI" id="CHEBI:15378"/>
        <dbReference type="ChEBI" id="CHEBI:57918"/>
        <dbReference type="ChEBI" id="CHEBI:58115"/>
        <dbReference type="ChEBI" id="CHEBI:60487"/>
        <dbReference type="ChEBI" id="CHEBI:60493"/>
        <dbReference type="EC" id="2.7.8.26"/>
    </reaction>
</comment>
<comment type="cofactor">
    <cofactor evidence="1">
        <name>Mg(2+)</name>
        <dbReference type="ChEBI" id="CHEBI:18420"/>
    </cofactor>
</comment>
<comment type="pathway">
    <text evidence="1">Cofactor biosynthesis; adenosylcobalamin biosynthesis; adenosylcobalamin from cob(II)yrinate a,c-diamide: step 7/7.</text>
</comment>
<comment type="subcellular location">
    <subcellularLocation>
        <location evidence="1">Cell inner membrane</location>
        <topology evidence="1">Multi-pass membrane protein</topology>
    </subcellularLocation>
</comment>
<comment type="similarity">
    <text evidence="1">Belongs to the CobS family.</text>
</comment>
<accession>B8DRQ3</accession>
<reference key="1">
    <citation type="submission" date="2008-10" db="EMBL/GenBank/DDBJ databases">
        <title>Complete sequence of Desulfovibrio vulgaris str. 'Miyazaki F'.</title>
        <authorList>
            <person name="Lucas S."/>
            <person name="Copeland A."/>
            <person name="Lapidus A."/>
            <person name="Glavina del Rio T."/>
            <person name="Dalin E."/>
            <person name="Tice H."/>
            <person name="Bruce D."/>
            <person name="Goodwin L."/>
            <person name="Pitluck S."/>
            <person name="Sims D."/>
            <person name="Brettin T."/>
            <person name="Detter J.C."/>
            <person name="Han C."/>
            <person name="Larimer F."/>
            <person name="Land M."/>
            <person name="Hauser L."/>
            <person name="Kyrpides N."/>
            <person name="Mikhailova N."/>
            <person name="Hazen T.C."/>
            <person name="Richardson P."/>
        </authorList>
    </citation>
    <scope>NUCLEOTIDE SEQUENCE [LARGE SCALE GENOMIC DNA]</scope>
    <source>
        <strain>DSM 19637 / Miyazaki F</strain>
    </source>
</reference>
<name>COBS_NITV9</name>
<organism>
    <name type="scientific">Nitratidesulfovibrio vulgaris (strain DSM 19637 / Miyazaki F)</name>
    <name type="common">Desulfovibrio vulgaris</name>
    <dbReference type="NCBI Taxonomy" id="883"/>
    <lineage>
        <taxon>Bacteria</taxon>
        <taxon>Pseudomonadati</taxon>
        <taxon>Thermodesulfobacteriota</taxon>
        <taxon>Desulfovibrionia</taxon>
        <taxon>Desulfovibrionales</taxon>
        <taxon>Desulfovibrionaceae</taxon>
        <taxon>Nitratidesulfovibrio</taxon>
    </lineage>
</organism>
<dbReference type="EC" id="2.7.8.26" evidence="1"/>
<dbReference type="EMBL" id="CP001197">
    <property type="protein sequence ID" value="ACL08340.1"/>
    <property type="molecule type" value="Genomic_DNA"/>
</dbReference>
<dbReference type="STRING" id="883.DvMF_1392"/>
<dbReference type="KEGG" id="dvm:DvMF_1392"/>
<dbReference type="eggNOG" id="COG0368">
    <property type="taxonomic scope" value="Bacteria"/>
</dbReference>
<dbReference type="HOGENOM" id="CLU_057426_1_2_7"/>
<dbReference type="OrthoDB" id="9794223at2"/>
<dbReference type="UniPathway" id="UPA00148">
    <property type="reaction ID" value="UER00238"/>
</dbReference>
<dbReference type="GO" id="GO:0005886">
    <property type="term" value="C:plasma membrane"/>
    <property type="evidence" value="ECO:0007669"/>
    <property type="project" value="UniProtKB-SubCell"/>
</dbReference>
<dbReference type="GO" id="GO:0051073">
    <property type="term" value="F:adenosylcobinamide-GDP ribazoletransferase activity"/>
    <property type="evidence" value="ECO:0007669"/>
    <property type="project" value="UniProtKB-UniRule"/>
</dbReference>
<dbReference type="GO" id="GO:0008818">
    <property type="term" value="F:cobalamin 5'-phosphate synthase activity"/>
    <property type="evidence" value="ECO:0007669"/>
    <property type="project" value="UniProtKB-UniRule"/>
</dbReference>
<dbReference type="GO" id="GO:0009236">
    <property type="term" value="P:cobalamin biosynthetic process"/>
    <property type="evidence" value="ECO:0007669"/>
    <property type="project" value="UniProtKB-UniRule"/>
</dbReference>
<dbReference type="HAMAP" id="MF_00719">
    <property type="entry name" value="CobS"/>
    <property type="match status" value="1"/>
</dbReference>
<dbReference type="InterPro" id="IPR003805">
    <property type="entry name" value="CobS"/>
</dbReference>
<dbReference type="PANTHER" id="PTHR34148">
    <property type="entry name" value="ADENOSYLCOBINAMIDE-GDP RIBAZOLETRANSFERASE"/>
    <property type="match status" value="1"/>
</dbReference>
<dbReference type="PANTHER" id="PTHR34148:SF1">
    <property type="entry name" value="ADENOSYLCOBINAMIDE-GDP RIBAZOLETRANSFERASE"/>
    <property type="match status" value="1"/>
</dbReference>
<dbReference type="Pfam" id="PF02654">
    <property type="entry name" value="CobS"/>
    <property type="match status" value="1"/>
</dbReference>
<sequence length="251" mass="25509">MKLASLLAAQWRALVLSTGFLTRLAPARAATDAEMAAGVAHYPLVGLLAGLVCAGPFLLGLLAGHPWVQALGYAALLLWATRGLHWDGWADLMDAWGSSATGDRFWDILKDSRIGAFGVLGIVFGVLGQVVLAHEVITLGRAGALVWAPVLGRAACVVLAACVPPGTRSTLGRLTSAGATHMTVLFCAGVTAATGVALAGPPAVLAAALPCACAVVWLTALARREGGLNGDFLGACIIQGELSALLGTILA</sequence>
<protein>
    <recommendedName>
        <fullName evidence="1">Adenosylcobinamide-GDP ribazoletransferase</fullName>
        <ecNumber evidence="1">2.7.8.26</ecNumber>
    </recommendedName>
    <alternativeName>
        <fullName evidence="1">Cobalamin synthase</fullName>
    </alternativeName>
    <alternativeName>
        <fullName evidence="1">Cobalamin-5'-phosphate synthase</fullName>
    </alternativeName>
</protein>